<reference key="1">
    <citation type="journal article" date="2004" name="Nat. Biotechnol.">
        <title>Complete sequence and comparative genome analysis of the dairy bacterium Streptococcus thermophilus.</title>
        <authorList>
            <person name="Bolotin A."/>
            <person name="Quinquis B."/>
            <person name="Renault P."/>
            <person name="Sorokin A."/>
            <person name="Ehrlich S.D."/>
            <person name="Kulakauskas S."/>
            <person name="Lapidus A."/>
            <person name="Goltsman E."/>
            <person name="Mazur M."/>
            <person name="Pusch G.D."/>
            <person name="Fonstein M."/>
            <person name="Overbeek R."/>
            <person name="Kyprides N."/>
            <person name="Purnelle B."/>
            <person name="Prozzi D."/>
            <person name="Ngui K."/>
            <person name="Masuy D."/>
            <person name="Hancy F."/>
            <person name="Burteau S."/>
            <person name="Boutry M."/>
            <person name="Delcour J."/>
            <person name="Goffeau A."/>
            <person name="Hols P."/>
        </authorList>
    </citation>
    <scope>NUCLEOTIDE SEQUENCE [LARGE SCALE GENOMIC DNA]</scope>
    <source>
        <strain>CNRZ 1066</strain>
    </source>
</reference>
<feature type="chain" id="PRO_0000272553" description="Phosphate import ATP-binding protein PstB 1">
    <location>
        <begin position="1"/>
        <end position="267"/>
    </location>
</feature>
<feature type="domain" description="ABC transporter" evidence="1">
    <location>
        <begin position="21"/>
        <end position="262"/>
    </location>
</feature>
<feature type="binding site" evidence="1">
    <location>
        <begin position="53"/>
        <end position="60"/>
    </location>
    <ligand>
        <name>ATP</name>
        <dbReference type="ChEBI" id="CHEBI:30616"/>
    </ligand>
</feature>
<keyword id="KW-0067">ATP-binding</keyword>
<keyword id="KW-1003">Cell membrane</keyword>
<keyword id="KW-0472">Membrane</keyword>
<keyword id="KW-0547">Nucleotide-binding</keyword>
<keyword id="KW-0592">Phosphate transport</keyword>
<keyword id="KW-1278">Translocase</keyword>
<keyword id="KW-0813">Transport</keyword>
<sequence>MTKYNWDERHIITFPEKKLALETKDLHVYYGQKEAINGIDMQFEKNKITALIGPSGCGKSTFLRSLNRMNDTIDVAKVTGQILYEGVDVNASNINVYEMRKHIGMVFQRPNPFAKSIYKNITFAHECNGVKDKQTLDEIVETSLKQAGLWEQVKDDLHKSAFTLSGGQQQRLCIARAIAVKPQILLMDEPAASLDPVATMQLEETMFELKEDYSIIIVTHNMQQAARASDYTAFFYLGDLIEYDETKKIFQDAALQSTSDYVSGRFG</sequence>
<proteinExistence type="inferred from homology"/>
<accession>Q5LZU3</accession>
<protein>
    <recommendedName>
        <fullName evidence="1">Phosphate import ATP-binding protein PstB 1</fullName>
        <ecNumber evidence="1">7.3.2.1</ecNumber>
    </recommendedName>
    <alternativeName>
        <fullName evidence="1">ABC phosphate transporter 1</fullName>
    </alternativeName>
    <alternativeName>
        <fullName evidence="1">Phosphate-transporting ATPase 1</fullName>
    </alternativeName>
</protein>
<comment type="function">
    <text evidence="1">Part of the ABC transporter complex PstSACB involved in phosphate import. Responsible for energy coupling to the transport system.</text>
</comment>
<comment type="catalytic activity">
    <reaction evidence="1">
        <text>phosphate(out) + ATP + H2O = ADP + 2 phosphate(in) + H(+)</text>
        <dbReference type="Rhea" id="RHEA:24440"/>
        <dbReference type="ChEBI" id="CHEBI:15377"/>
        <dbReference type="ChEBI" id="CHEBI:15378"/>
        <dbReference type="ChEBI" id="CHEBI:30616"/>
        <dbReference type="ChEBI" id="CHEBI:43474"/>
        <dbReference type="ChEBI" id="CHEBI:456216"/>
        <dbReference type="EC" id="7.3.2.1"/>
    </reaction>
</comment>
<comment type="subunit">
    <text evidence="1">The complex is composed of two ATP-binding proteins (PstB), two transmembrane proteins (PstC and PstA) and a solute-binding protein (PstS).</text>
</comment>
<comment type="subcellular location">
    <subcellularLocation>
        <location evidence="1">Cell membrane</location>
        <topology evidence="1">Peripheral membrane protein</topology>
    </subcellularLocation>
</comment>
<comment type="similarity">
    <text evidence="1">Belongs to the ABC transporter superfamily. Phosphate importer (TC 3.A.1.7) family.</text>
</comment>
<dbReference type="EC" id="7.3.2.1" evidence="1"/>
<dbReference type="EMBL" id="CP000024">
    <property type="protein sequence ID" value="AAV62582.1"/>
    <property type="molecule type" value="Genomic_DNA"/>
</dbReference>
<dbReference type="SMR" id="Q5LZU3"/>
<dbReference type="KEGG" id="stc:str1004"/>
<dbReference type="HOGENOM" id="CLU_000604_1_22_9"/>
<dbReference type="GO" id="GO:0005886">
    <property type="term" value="C:plasma membrane"/>
    <property type="evidence" value="ECO:0007669"/>
    <property type="project" value="UniProtKB-SubCell"/>
</dbReference>
<dbReference type="GO" id="GO:0005524">
    <property type="term" value="F:ATP binding"/>
    <property type="evidence" value="ECO:0007669"/>
    <property type="project" value="UniProtKB-KW"/>
</dbReference>
<dbReference type="GO" id="GO:0016887">
    <property type="term" value="F:ATP hydrolysis activity"/>
    <property type="evidence" value="ECO:0007669"/>
    <property type="project" value="InterPro"/>
</dbReference>
<dbReference type="GO" id="GO:0015415">
    <property type="term" value="F:ATPase-coupled phosphate ion transmembrane transporter activity"/>
    <property type="evidence" value="ECO:0007669"/>
    <property type="project" value="UniProtKB-EC"/>
</dbReference>
<dbReference type="GO" id="GO:0035435">
    <property type="term" value="P:phosphate ion transmembrane transport"/>
    <property type="evidence" value="ECO:0007669"/>
    <property type="project" value="InterPro"/>
</dbReference>
<dbReference type="CDD" id="cd03260">
    <property type="entry name" value="ABC_PstB_phosphate_transporter"/>
    <property type="match status" value="1"/>
</dbReference>
<dbReference type="Gene3D" id="3.40.50.300">
    <property type="entry name" value="P-loop containing nucleotide triphosphate hydrolases"/>
    <property type="match status" value="1"/>
</dbReference>
<dbReference type="InterPro" id="IPR003593">
    <property type="entry name" value="AAA+_ATPase"/>
</dbReference>
<dbReference type="InterPro" id="IPR003439">
    <property type="entry name" value="ABC_transporter-like_ATP-bd"/>
</dbReference>
<dbReference type="InterPro" id="IPR017871">
    <property type="entry name" value="ABC_transporter-like_CS"/>
</dbReference>
<dbReference type="InterPro" id="IPR027417">
    <property type="entry name" value="P-loop_NTPase"/>
</dbReference>
<dbReference type="InterPro" id="IPR005670">
    <property type="entry name" value="PstB-like"/>
</dbReference>
<dbReference type="NCBIfam" id="TIGR00972">
    <property type="entry name" value="3a0107s01c2"/>
    <property type="match status" value="1"/>
</dbReference>
<dbReference type="PANTHER" id="PTHR43423">
    <property type="entry name" value="ABC TRANSPORTER I FAMILY MEMBER 17"/>
    <property type="match status" value="1"/>
</dbReference>
<dbReference type="PANTHER" id="PTHR43423:SF10">
    <property type="entry name" value="PHOSPHATE IMPORT ATP-BINDING PROTEIN PSTB 2"/>
    <property type="match status" value="1"/>
</dbReference>
<dbReference type="Pfam" id="PF00005">
    <property type="entry name" value="ABC_tran"/>
    <property type="match status" value="1"/>
</dbReference>
<dbReference type="SMART" id="SM00382">
    <property type="entry name" value="AAA"/>
    <property type="match status" value="1"/>
</dbReference>
<dbReference type="SUPFAM" id="SSF52540">
    <property type="entry name" value="P-loop containing nucleoside triphosphate hydrolases"/>
    <property type="match status" value="1"/>
</dbReference>
<dbReference type="PROSITE" id="PS00211">
    <property type="entry name" value="ABC_TRANSPORTER_1"/>
    <property type="match status" value="1"/>
</dbReference>
<dbReference type="PROSITE" id="PS50893">
    <property type="entry name" value="ABC_TRANSPORTER_2"/>
    <property type="match status" value="1"/>
</dbReference>
<dbReference type="PROSITE" id="PS51238">
    <property type="entry name" value="PSTB"/>
    <property type="match status" value="1"/>
</dbReference>
<name>PSTB1_STRT1</name>
<evidence type="ECO:0000255" key="1">
    <source>
        <dbReference type="HAMAP-Rule" id="MF_01702"/>
    </source>
</evidence>
<gene>
    <name evidence="1" type="primary">pstB1</name>
    <name type="ordered locus">str1004</name>
</gene>
<organism>
    <name type="scientific">Streptococcus thermophilus (strain CNRZ 1066)</name>
    <dbReference type="NCBI Taxonomy" id="299768"/>
    <lineage>
        <taxon>Bacteria</taxon>
        <taxon>Bacillati</taxon>
        <taxon>Bacillota</taxon>
        <taxon>Bacilli</taxon>
        <taxon>Lactobacillales</taxon>
        <taxon>Streptococcaceae</taxon>
        <taxon>Streptococcus</taxon>
    </lineage>
</organism>